<comment type="function">
    <text evidence="1">Joins adenosylcobinamide-GDP and alpha-ribazole to generate adenosylcobalamin (Ado-cobalamin). Also synthesizes adenosylcobalamin 5'-phosphate from adenosylcobinamide-GDP and alpha-ribazole 5'-phosphate.</text>
</comment>
<comment type="catalytic activity">
    <reaction evidence="1">
        <text>alpha-ribazole + adenosylcob(III)inamide-GDP = adenosylcob(III)alamin + GMP + H(+)</text>
        <dbReference type="Rhea" id="RHEA:16049"/>
        <dbReference type="ChEBI" id="CHEBI:10329"/>
        <dbReference type="ChEBI" id="CHEBI:15378"/>
        <dbReference type="ChEBI" id="CHEBI:18408"/>
        <dbReference type="ChEBI" id="CHEBI:58115"/>
        <dbReference type="ChEBI" id="CHEBI:60487"/>
        <dbReference type="EC" id="2.7.8.26"/>
    </reaction>
</comment>
<comment type="catalytic activity">
    <reaction evidence="1">
        <text>alpha-ribazole 5'-phosphate + adenosylcob(III)inamide-GDP = adenosylcob(III)alamin 5'-phosphate + GMP + H(+)</text>
        <dbReference type="Rhea" id="RHEA:23560"/>
        <dbReference type="ChEBI" id="CHEBI:15378"/>
        <dbReference type="ChEBI" id="CHEBI:57918"/>
        <dbReference type="ChEBI" id="CHEBI:58115"/>
        <dbReference type="ChEBI" id="CHEBI:60487"/>
        <dbReference type="ChEBI" id="CHEBI:60493"/>
        <dbReference type="EC" id="2.7.8.26"/>
    </reaction>
</comment>
<comment type="cofactor">
    <cofactor evidence="1">
        <name>Mg(2+)</name>
        <dbReference type="ChEBI" id="CHEBI:18420"/>
    </cofactor>
</comment>
<comment type="pathway">
    <text evidence="1">Cofactor biosynthesis; adenosylcobalamin biosynthesis; adenosylcobalamin from cob(II)yrinate a,c-diamide: step 7/7.</text>
</comment>
<comment type="subcellular location">
    <subcellularLocation>
        <location evidence="1">Cell inner membrane</location>
        <topology evidence="1">Multi-pass membrane protein</topology>
    </subcellularLocation>
</comment>
<comment type="similarity">
    <text evidence="1">Belongs to the CobS family.</text>
</comment>
<organism>
    <name type="scientific">Leptospira biflexa serovar Patoc (strain Patoc 1 / Ames)</name>
    <dbReference type="NCBI Taxonomy" id="355278"/>
    <lineage>
        <taxon>Bacteria</taxon>
        <taxon>Pseudomonadati</taxon>
        <taxon>Spirochaetota</taxon>
        <taxon>Spirochaetia</taxon>
        <taxon>Leptospirales</taxon>
        <taxon>Leptospiraceae</taxon>
        <taxon>Leptospira</taxon>
    </lineage>
</organism>
<dbReference type="EC" id="2.7.8.26" evidence="1"/>
<dbReference type="EMBL" id="CP000777">
    <property type="protein sequence ID" value="ABZ95314.1"/>
    <property type="molecule type" value="Genomic_DNA"/>
</dbReference>
<dbReference type="RefSeq" id="WP_012389865.1">
    <property type="nucleotide sequence ID" value="NC_010842.1"/>
</dbReference>
<dbReference type="SMR" id="B0SFE6"/>
<dbReference type="KEGG" id="lbf:LBF_2839"/>
<dbReference type="HOGENOM" id="CLU_057426_1_1_12"/>
<dbReference type="UniPathway" id="UPA00148">
    <property type="reaction ID" value="UER00238"/>
</dbReference>
<dbReference type="GO" id="GO:0005886">
    <property type="term" value="C:plasma membrane"/>
    <property type="evidence" value="ECO:0007669"/>
    <property type="project" value="UniProtKB-SubCell"/>
</dbReference>
<dbReference type="GO" id="GO:0051073">
    <property type="term" value="F:adenosylcobinamide-GDP ribazoletransferase activity"/>
    <property type="evidence" value="ECO:0007669"/>
    <property type="project" value="UniProtKB-UniRule"/>
</dbReference>
<dbReference type="GO" id="GO:0008818">
    <property type="term" value="F:cobalamin 5'-phosphate synthase activity"/>
    <property type="evidence" value="ECO:0007669"/>
    <property type="project" value="UniProtKB-UniRule"/>
</dbReference>
<dbReference type="GO" id="GO:0009236">
    <property type="term" value="P:cobalamin biosynthetic process"/>
    <property type="evidence" value="ECO:0007669"/>
    <property type="project" value="UniProtKB-UniRule"/>
</dbReference>
<dbReference type="HAMAP" id="MF_00719">
    <property type="entry name" value="CobS"/>
    <property type="match status" value="1"/>
</dbReference>
<dbReference type="InterPro" id="IPR003805">
    <property type="entry name" value="CobS"/>
</dbReference>
<dbReference type="PANTHER" id="PTHR34148">
    <property type="entry name" value="ADENOSYLCOBINAMIDE-GDP RIBAZOLETRANSFERASE"/>
    <property type="match status" value="1"/>
</dbReference>
<dbReference type="PANTHER" id="PTHR34148:SF1">
    <property type="entry name" value="ADENOSYLCOBINAMIDE-GDP RIBAZOLETRANSFERASE"/>
    <property type="match status" value="1"/>
</dbReference>
<dbReference type="Pfam" id="PF02654">
    <property type="entry name" value="CobS"/>
    <property type="match status" value="1"/>
</dbReference>
<feature type="chain" id="PRO_1000132585" description="Adenosylcobinamide-GDP ribazoletransferase">
    <location>
        <begin position="1"/>
        <end position="275"/>
    </location>
</feature>
<feature type="transmembrane region" description="Helical" evidence="1">
    <location>
        <begin position="53"/>
        <end position="73"/>
    </location>
</feature>
<feature type="transmembrane region" description="Helical" evidence="1">
    <location>
        <begin position="113"/>
        <end position="133"/>
    </location>
</feature>
<feature type="transmembrane region" description="Helical" evidence="1">
    <location>
        <begin position="144"/>
        <end position="164"/>
    </location>
</feature>
<feature type="transmembrane region" description="Helical" evidence="1">
    <location>
        <begin position="204"/>
        <end position="224"/>
    </location>
</feature>
<feature type="transmembrane region" description="Helical" evidence="1">
    <location>
        <begin position="225"/>
        <end position="245"/>
    </location>
</feature>
<feature type="transmembrane region" description="Helical" evidence="1">
    <location>
        <begin position="253"/>
        <end position="273"/>
    </location>
</feature>
<reference key="1">
    <citation type="journal article" date="2008" name="PLoS ONE">
        <title>Genome sequence of the saprophyte Leptospira biflexa provides insights into the evolution of Leptospira and the pathogenesis of leptospirosis.</title>
        <authorList>
            <person name="Picardeau M."/>
            <person name="Bulach D.M."/>
            <person name="Bouchier C."/>
            <person name="Zuerner R.L."/>
            <person name="Zidane N."/>
            <person name="Wilson P.J."/>
            <person name="Creno S."/>
            <person name="Kuczek E.S."/>
            <person name="Bommezzadri S."/>
            <person name="Davis J.C."/>
            <person name="McGrath A."/>
            <person name="Johnson M.J."/>
            <person name="Boursaux-Eude C."/>
            <person name="Seemann T."/>
            <person name="Rouy Z."/>
            <person name="Coppel R.L."/>
            <person name="Rood J.I."/>
            <person name="Lajus A."/>
            <person name="Davies J.K."/>
            <person name="Medigue C."/>
            <person name="Adler B."/>
        </authorList>
    </citation>
    <scope>NUCLEOTIDE SEQUENCE [LARGE SCALE GENOMIC DNA]</scope>
    <source>
        <strain>Patoc 1 / Ames</strain>
    </source>
</reference>
<keyword id="KW-0997">Cell inner membrane</keyword>
<keyword id="KW-1003">Cell membrane</keyword>
<keyword id="KW-0169">Cobalamin biosynthesis</keyword>
<keyword id="KW-0460">Magnesium</keyword>
<keyword id="KW-0472">Membrane</keyword>
<keyword id="KW-0808">Transferase</keyword>
<keyword id="KW-0812">Transmembrane</keyword>
<keyword id="KW-1133">Transmembrane helix</keyword>
<gene>
    <name evidence="1" type="primary">cobS</name>
    <name type="ordered locus">LBF_2839</name>
</gene>
<sequence>MKYILLEIRLFFVCMSFLTRIPSPRWIGFQEEWLHHSIKYSPSVGFLLGSLQWFVFLLFQFLFGPTIAFTISLGFLLILTGAFHEDGFSDFCDGIGGGWKREDILRIMKDSRVGSFGAAGISLLLLLKVLGVSETFHQYEIKGLPFTFGSSAQIHLLSVWLYFVTAQSFSRFLSILMMKLLPYAKEEGYAKPMAKEINWPQIYFACIFGVTPFLALVYLHPYFLLSLLCIIPSFVYMFSLMKRWIQGFTGDCLGAVQQVVETCIWISGVFVWISI</sequence>
<proteinExistence type="inferred from homology"/>
<name>COBS_LEPBA</name>
<evidence type="ECO:0000255" key="1">
    <source>
        <dbReference type="HAMAP-Rule" id="MF_00719"/>
    </source>
</evidence>
<accession>B0SFE6</accession>
<protein>
    <recommendedName>
        <fullName evidence="1">Adenosylcobinamide-GDP ribazoletransferase</fullName>
        <ecNumber evidence="1">2.7.8.26</ecNumber>
    </recommendedName>
    <alternativeName>
        <fullName evidence="1">Cobalamin synthase</fullName>
    </alternativeName>
    <alternativeName>
        <fullName evidence="1">Cobalamin-5'-phosphate synthase</fullName>
    </alternativeName>
</protein>